<comment type="function">
    <text evidence="1">Proton-coupled chloride transporter. Functions as antiport system and exchanges two chloride ions for 1 proton. Probably acts as an electrical shunt for an outwardly-directed proton pump that is linked to amino acid decarboxylation, as part of the extreme acid resistance (XAR) response.</text>
</comment>
<comment type="catalytic activity">
    <reaction evidence="1">
        <text>2 chloride(in) + H(+)(out) = 2 chloride(out) + H(+)(in)</text>
        <dbReference type="Rhea" id="RHEA:29567"/>
        <dbReference type="ChEBI" id="CHEBI:15378"/>
        <dbReference type="ChEBI" id="CHEBI:17996"/>
    </reaction>
</comment>
<comment type="subunit">
    <text evidence="1">Homodimer.</text>
</comment>
<comment type="subcellular location">
    <subcellularLocation>
        <location evidence="1">Cell inner membrane</location>
        <topology evidence="1">Multi-pass membrane protein</topology>
    </subcellularLocation>
</comment>
<comment type="similarity">
    <text evidence="1">Belongs to the chloride channel (TC 2.A.49) family. ClcA subfamily.</text>
</comment>
<evidence type="ECO:0000255" key="1">
    <source>
        <dbReference type="HAMAP-Rule" id="MF_01128"/>
    </source>
</evidence>
<sequence length="473" mass="50337">MKTDTPSLETPQAARLRRRQLIRQLLERDKTPLAILFMAAVVGTLVGLAAVAFDKGVAWLQNQRMGALVHTADNYPLLLTVAFLCSAVLAMFGYFLVRKYAPEAGGSGIPEIEGALEDQRPVRWWRVLPVKFFGGLGTLGGGMGLGREGPTVQIGGNISRMVLDIFRLKGDEARHTLLATGAAAGLAAAFNAPLAGILFIIEEMRPQFRYTLISIKAVFIGVIMSTIMYRIFNHEVALIDVGKLSDAPLNTLWLYLILGIIFGIFGPIFNKWVLGMQDLLHRVHGGNITKWVLMGGAIGGLCGLLGFVAPATSGGGFNLIPIATAGNFSMGMLVFIFVARVITTLLCFSSGAPGGIFAPMLALGTVLGTAFGMVAVELFPQYHLEAGTFAIAGMGALLAASIRAPLTGIILVLEMTDNYQLILPMIITGLGATLLAQFTGGKPLYSAILARTLAKQEAEQLARSKAASASENT</sequence>
<reference key="1">
    <citation type="journal article" date="2006" name="BMC Genomics">
        <title>Complete genome sequence of Shigella flexneri 5b and comparison with Shigella flexneri 2a.</title>
        <authorList>
            <person name="Nie H."/>
            <person name="Yang F."/>
            <person name="Zhang X."/>
            <person name="Yang J."/>
            <person name="Chen L."/>
            <person name="Wang J."/>
            <person name="Xiong Z."/>
            <person name="Peng J."/>
            <person name="Sun L."/>
            <person name="Dong J."/>
            <person name="Xue Y."/>
            <person name="Xu X."/>
            <person name="Chen S."/>
            <person name="Yao Z."/>
            <person name="Shen Y."/>
            <person name="Jin Q."/>
        </authorList>
    </citation>
    <scope>NUCLEOTIDE SEQUENCE [LARGE SCALE GENOMIC DNA]</scope>
    <source>
        <strain>8401</strain>
    </source>
</reference>
<dbReference type="EMBL" id="CP000266">
    <property type="protein sequence ID" value="ABF02425.1"/>
    <property type="molecule type" value="Genomic_DNA"/>
</dbReference>
<dbReference type="RefSeq" id="WP_000845386.1">
    <property type="nucleotide sequence ID" value="NC_008258.1"/>
</dbReference>
<dbReference type="SMR" id="Q0T851"/>
<dbReference type="KEGG" id="sfv:SFV_0140"/>
<dbReference type="HOGENOM" id="CLU_015263_7_0_6"/>
<dbReference type="Proteomes" id="UP000000659">
    <property type="component" value="Chromosome"/>
</dbReference>
<dbReference type="GO" id="GO:0005886">
    <property type="term" value="C:plasma membrane"/>
    <property type="evidence" value="ECO:0007669"/>
    <property type="project" value="UniProtKB-SubCell"/>
</dbReference>
<dbReference type="GO" id="GO:0015297">
    <property type="term" value="F:antiporter activity"/>
    <property type="evidence" value="ECO:0007669"/>
    <property type="project" value="UniProtKB-UniRule"/>
</dbReference>
<dbReference type="GO" id="GO:0005247">
    <property type="term" value="F:voltage-gated chloride channel activity"/>
    <property type="evidence" value="ECO:0007669"/>
    <property type="project" value="TreeGrafter"/>
</dbReference>
<dbReference type="CDD" id="cd01031">
    <property type="entry name" value="EriC"/>
    <property type="match status" value="1"/>
</dbReference>
<dbReference type="FunFam" id="1.10.3080.10:FF:000005">
    <property type="entry name" value="H(+)/Cl(-) exchange transporter ClcA"/>
    <property type="match status" value="1"/>
</dbReference>
<dbReference type="Gene3D" id="1.10.3080.10">
    <property type="entry name" value="Clc chloride channel"/>
    <property type="match status" value="1"/>
</dbReference>
<dbReference type="HAMAP" id="MF_01128">
    <property type="entry name" value="CLC_ClcA"/>
    <property type="match status" value="1"/>
</dbReference>
<dbReference type="InterPro" id="IPR023861">
    <property type="entry name" value="Cl-channel_ClcA"/>
</dbReference>
<dbReference type="InterPro" id="IPR014743">
    <property type="entry name" value="Cl-channel_core"/>
</dbReference>
<dbReference type="InterPro" id="IPR001807">
    <property type="entry name" value="ClC"/>
</dbReference>
<dbReference type="NCBIfam" id="NF003640">
    <property type="entry name" value="PRK05277.1"/>
    <property type="match status" value="1"/>
</dbReference>
<dbReference type="PANTHER" id="PTHR45711">
    <property type="entry name" value="CHLORIDE CHANNEL PROTEIN"/>
    <property type="match status" value="1"/>
</dbReference>
<dbReference type="PANTHER" id="PTHR45711:SF6">
    <property type="entry name" value="CHLORIDE CHANNEL PROTEIN"/>
    <property type="match status" value="1"/>
</dbReference>
<dbReference type="Pfam" id="PF00654">
    <property type="entry name" value="Voltage_CLC"/>
    <property type="match status" value="1"/>
</dbReference>
<dbReference type="PRINTS" id="PR00762">
    <property type="entry name" value="CLCHANNEL"/>
</dbReference>
<dbReference type="SUPFAM" id="SSF81340">
    <property type="entry name" value="Clc chloride channel"/>
    <property type="match status" value="1"/>
</dbReference>
<feature type="chain" id="PRO_0000301544" description="H(+)/Cl(-) exchange transporter ClcA">
    <location>
        <begin position="1"/>
        <end position="473"/>
    </location>
</feature>
<feature type="topological domain" description="Cytoplasmic" evidence="1">
    <location>
        <begin position="1"/>
        <end position="32"/>
    </location>
</feature>
<feature type="transmembrane region" description="Helical" evidence="1">
    <location>
        <begin position="33"/>
        <end position="69"/>
    </location>
</feature>
<feature type="topological domain" description="Periplasmic" evidence="1">
    <location>
        <begin position="70"/>
        <end position="76"/>
    </location>
</feature>
<feature type="transmembrane region" description="Helical" evidence="1">
    <location>
        <begin position="77"/>
        <end position="100"/>
    </location>
</feature>
<feature type="intramembrane region" description="Helical" evidence="1">
    <location>
        <begin position="109"/>
        <end position="116"/>
    </location>
</feature>
<feature type="topological domain" description="Cytoplasmic" evidence="1">
    <location>
        <begin position="117"/>
        <end position="123"/>
    </location>
</feature>
<feature type="transmembrane region" description="Helical" evidence="1">
    <location>
        <begin position="124"/>
        <end position="141"/>
    </location>
</feature>
<feature type="transmembrane region" description="Helical" evidence="1">
    <location>
        <begin position="148"/>
        <end position="166"/>
    </location>
</feature>
<feature type="topological domain" description="Cytoplasmic" evidence="1">
    <location>
        <begin position="167"/>
        <end position="176"/>
    </location>
</feature>
<feature type="intramembrane region" description="Helical" evidence="1">
    <location>
        <begin position="177"/>
        <end position="189"/>
    </location>
</feature>
<feature type="intramembrane region" description="Helical" evidence="1">
    <location>
        <begin position="193"/>
        <end position="201"/>
    </location>
</feature>
<feature type="topological domain" description="Cytoplasmic" evidence="1">
    <location>
        <begin position="202"/>
        <end position="214"/>
    </location>
</feature>
<feature type="transmembrane region" description="Helical" evidence="1">
    <location>
        <begin position="215"/>
        <end position="232"/>
    </location>
</feature>
<feature type="topological domain" description="Periplasmic" evidence="1">
    <location>
        <begin position="233"/>
        <end position="252"/>
    </location>
</feature>
<feature type="transmembrane region" description="Helical" evidence="1">
    <location>
        <begin position="253"/>
        <end position="281"/>
    </location>
</feature>
<feature type="topological domain" description="Cytoplasmic" evidence="1">
    <location>
        <begin position="282"/>
        <end position="287"/>
    </location>
</feature>
<feature type="transmembrane region" description="Helical" evidence="1">
    <location>
        <begin position="288"/>
        <end position="309"/>
    </location>
</feature>
<feature type="topological domain" description="Periplasmic" evidence="1">
    <location>
        <begin position="310"/>
        <end position="329"/>
    </location>
</feature>
<feature type="transmembrane region" description="Helical" evidence="1">
    <location>
        <begin position="330"/>
        <end position="349"/>
    </location>
</feature>
<feature type="transmembrane region" description="Helical" evidence="1">
    <location>
        <begin position="355"/>
        <end position="376"/>
    </location>
</feature>
<feature type="topological domain" description="Periplasmic" evidence="1">
    <location>
        <begin position="377"/>
        <end position="386"/>
    </location>
</feature>
<feature type="intramembrane region" description="Helical" evidence="1">
    <location>
        <begin position="387"/>
        <end position="401"/>
    </location>
</feature>
<feature type="intramembrane region" description="Note=Loop between two helices" evidence="1">
    <location>
        <begin position="402"/>
        <end position="404"/>
    </location>
</feature>
<feature type="intramembrane region" description="Helical" evidence="1">
    <location>
        <begin position="405"/>
        <end position="416"/>
    </location>
</feature>
<feature type="intramembrane region" description="Note=Loop between two helices" evidence="1">
    <location>
        <begin position="417"/>
        <end position="421"/>
    </location>
</feature>
<feature type="transmembrane region" description="Helical" evidence="1">
    <location>
        <begin position="422"/>
        <end position="438"/>
    </location>
</feature>
<feature type="topological domain" description="Cytoplasmic" evidence="1">
    <location>
        <begin position="439"/>
        <end position="473"/>
    </location>
</feature>
<feature type="short sequence motif" description="Selectivity filter part_1" evidence="1">
    <location>
        <begin position="106"/>
        <end position="110"/>
    </location>
</feature>
<feature type="short sequence motif" description="Selectivity filter part_2" evidence="1">
    <location>
        <begin position="146"/>
        <end position="150"/>
    </location>
</feature>
<feature type="short sequence motif" description="Selectivity filter part_3" evidence="1">
    <location>
        <begin position="355"/>
        <end position="359"/>
    </location>
</feature>
<feature type="binding site" evidence="1">
    <location>
        <position position="107"/>
    </location>
    <ligand>
        <name>chloride</name>
        <dbReference type="ChEBI" id="CHEBI:17996"/>
    </ligand>
</feature>
<feature type="binding site" evidence="1">
    <location>
        <position position="356"/>
    </location>
    <ligand>
        <name>chloride</name>
        <dbReference type="ChEBI" id="CHEBI:17996"/>
    </ligand>
</feature>
<feature type="binding site" evidence="1">
    <location>
        <position position="357"/>
    </location>
    <ligand>
        <name>chloride</name>
        <dbReference type="ChEBI" id="CHEBI:17996"/>
    </ligand>
</feature>
<feature type="binding site" evidence="1">
    <location>
        <position position="445"/>
    </location>
    <ligand>
        <name>chloride</name>
        <dbReference type="ChEBI" id="CHEBI:17996"/>
    </ligand>
</feature>
<feature type="site" description="Mediates proton transfer from the outer aqueous phase to the interior of the protein; involved in linking H(+) and Cl(-) transport" evidence="1">
    <location>
        <position position="148"/>
    </location>
</feature>
<feature type="site" description="Mediates proton transfer from the protein to the inner aqueous phase" evidence="1">
    <location>
        <position position="203"/>
    </location>
</feature>
<gene>
    <name evidence="1" type="primary">clcA</name>
    <name evidence="1" type="synonym">eriC</name>
    <name type="ordered locus">SFV_0140</name>
</gene>
<organism>
    <name type="scientific">Shigella flexneri serotype 5b (strain 8401)</name>
    <dbReference type="NCBI Taxonomy" id="373384"/>
    <lineage>
        <taxon>Bacteria</taxon>
        <taxon>Pseudomonadati</taxon>
        <taxon>Pseudomonadota</taxon>
        <taxon>Gammaproteobacteria</taxon>
        <taxon>Enterobacterales</taxon>
        <taxon>Enterobacteriaceae</taxon>
        <taxon>Shigella</taxon>
    </lineage>
</organism>
<proteinExistence type="inferred from homology"/>
<keyword id="KW-0050">Antiport</keyword>
<keyword id="KW-0997">Cell inner membrane</keyword>
<keyword id="KW-1003">Cell membrane</keyword>
<keyword id="KW-0868">Chloride</keyword>
<keyword id="KW-0406">Ion transport</keyword>
<keyword id="KW-0472">Membrane</keyword>
<keyword id="KW-0812">Transmembrane</keyword>
<keyword id="KW-1133">Transmembrane helix</keyword>
<keyword id="KW-0813">Transport</keyword>
<accession>Q0T851</accession>
<name>CLCA_SHIF8</name>
<protein>
    <recommendedName>
        <fullName evidence="1">H(+)/Cl(-) exchange transporter ClcA</fullName>
    </recommendedName>
</protein>